<evidence type="ECO:0000255" key="1">
    <source>
        <dbReference type="HAMAP-Rule" id="MF_00012"/>
    </source>
</evidence>
<accession>B7I2C2</accession>
<reference key="1">
    <citation type="journal article" date="2008" name="J. Bacteriol.">
        <title>Comparative genome sequence analysis of multidrug-resistant Acinetobacter baumannii.</title>
        <authorList>
            <person name="Adams M.D."/>
            <person name="Goglin K."/>
            <person name="Molyneaux N."/>
            <person name="Hujer K.M."/>
            <person name="Lavender H."/>
            <person name="Jamison J.J."/>
            <person name="MacDonald I.J."/>
            <person name="Martin K.M."/>
            <person name="Russo T."/>
            <person name="Campagnari A.A."/>
            <person name="Hujer A.M."/>
            <person name="Bonomo R.A."/>
            <person name="Gill S.R."/>
        </authorList>
    </citation>
    <scope>NUCLEOTIDE SEQUENCE [LARGE SCALE GENOMIC DNA]</scope>
    <source>
        <strain>AB0057</strain>
    </source>
</reference>
<proteinExistence type="inferred from homology"/>
<comment type="function">
    <text evidence="1">Functions in the biosynthesis of branched-chain amino acids. Catalyzes the dehydration of (2R,3R)-2,3-dihydroxy-3-methylpentanoate (2,3-dihydroxy-3-methylvalerate) into 2-oxo-3-methylpentanoate (2-oxo-3-methylvalerate) and of (2R)-2,3-dihydroxy-3-methylbutanoate (2,3-dihydroxyisovalerate) into 2-oxo-3-methylbutanoate (2-oxoisovalerate), the penultimate precursor to L-isoleucine and L-valine, respectively.</text>
</comment>
<comment type="catalytic activity">
    <reaction evidence="1">
        <text>(2R)-2,3-dihydroxy-3-methylbutanoate = 3-methyl-2-oxobutanoate + H2O</text>
        <dbReference type="Rhea" id="RHEA:24809"/>
        <dbReference type="ChEBI" id="CHEBI:11851"/>
        <dbReference type="ChEBI" id="CHEBI:15377"/>
        <dbReference type="ChEBI" id="CHEBI:49072"/>
        <dbReference type="EC" id="4.2.1.9"/>
    </reaction>
    <physiologicalReaction direction="left-to-right" evidence="1">
        <dbReference type="Rhea" id="RHEA:24810"/>
    </physiologicalReaction>
</comment>
<comment type="catalytic activity">
    <reaction evidence="1">
        <text>(2R,3R)-2,3-dihydroxy-3-methylpentanoate = (S)-3-methyl-2-oxopentanoate + H2O</text>
        <dbReference type="Rhea" id="RHEA:27694"/>
        <dbReference type="ChEBI" id="CHEBI:15377"/>
        <dbReference type="ChEBI" id="CHEBI:35146"/>
        <dbReference type="ChEBI" id="CHEBI:49258"/>
        <dbReference type="EC" id="4.2.1.9"/>
    </reaction>
    <physiologicalReaction direction="left-to-right" evidence="1">
        <dbReference type="Rhea" id="RHEA:27695"/>
    </physiologicalReaction>
</comment>
<comment type="cofactor">
    <cofactor evidence="1">
        <name>[2Fe-2S] cluster</name>
        <dbReference type="ChEBI" id="CHEBI:190135"/>
    </cofactor>
    <text evidence="1">Binds 1 [2Fe-2S] cluster per subunit. This cluster acts as a Lewis acid cofactor.</text>
</comment>
<comment type="cofactor">
    <cofactor evidence="1">
        <name>Mg(2+)</name>
        <dbReference type="ChEBI" id="CHEBI:18420"/>
    </cofactor>
</comment>
<comment type="pathway">
    <text evidence="1">Amino-acid biosynthesis; L-isoleucine biosynthesis; L-isoleucine from 2-oxobutanoate: step 3/4.</text>
</comment>
<comment type="pathway">
    <text evidence="1">Amino-acid biosynthesis; L-valine biosynthesis; L-valine from pyruvate: step 3/4.</text>
</comment>
<comment type="subunit">
    <text evidence="1">Homodimer.</text>
</comment>
<comment type="similarity">
    <text evidence="1">Belongs to the IlvD/Edd family.</text>
</comment>
<feature type="chain" id="PRO_1000190644" description="Dihydroxy-acid dehydratase">
    <location>
        <begin position="1"/>
        <end position="609"/>
    </location>
</feature>
<feature type="active site" description="Proton acceptor" evidence="1">
    <location>
        <position position="517"/>
    </location>
</feature>
<feature type="binding site" evidence="1">
    <location>
        <position position="81"/>
    </location>
    <ligand>
        <name>Mg(2+)</name>
        <dbReference type="ChEBI" id="CHEBI:18420"/>
    </ligand>
</feature>
<feature type="binding site" evidence="1">
    <location>
        <position position="122"/>
    </location>
    <ligand>
        <name>[2Fe-2S] cluster</name>
        <dbReference type="ChEBI" id="CHEBI:190135"/>
    </ligand>
</feature>
<feature type="binding site" evidence="1">
    <location>
        <position position="123"/>
    </location>
    <ligand>
        <name>Mg(2+)</name>
        <dbReference type="ChEBI" id="CHEBI:18420"/>
    </ligand>
</feature>
<feature type="binding site" description="via carbamate group" evidence="1">
    <location>
        <position position="124"/>
    </location>
    <ligand>
        <name>Mg(2+)</name>
        <dbReference type="ChEBI" id="CHEBI:18420"/>
    </ligand>
</feature>
<feature type="binding site" evidence="1">
    <location>
        <position position="195"/>
    </location>
    <ligand>
        <name>[2Fe-2S] cluster</name>
        <dbReference type="ChEBI" id="CHEBI:190135"/>
    </ligand>
</feature>
<feature type="binding site" evidence="1">
    <location>
        <position position="491"/>
    </location>
    <ligand>
        <name>Mg(2+)</name>
        <dbReference type="ChEBI" id="CHEBI:18420"/>
    </ligand>
</feature>
<feature type="modified residue" description="N6-carboxylysine" evidence="1">
    <location>
        <position position="124"/>
    </location>
</feature>
<gene>
    <name evidence="1" type="primary">ilvD</name>
    <name type="ordered locus">AB57_3911</name>
</gene>
<organism>
    <name type="scientific">Acinetobacter baumannii (strain AB0057)</name>
    <dbReference type="NCBI Taxonomy" id="480119"/>
    <lineage>
        <taxon>Bacteria</taxon>
        <taxon>Pseudomonadati</taxon>
        <taxon>Pseudomonadota</taxon>
        <taxon>Gammaproteobacteria</taxon>
        <taxon>Moraxellales</taxon>
        <taxon>Moraxellaceae</taxon>
        <taxon>Acinetobacter</taxon>
        <taxon>Acinetobacter calcoaceticus/baumannii complex</taxon>
    </lineage>
</organism>
<keyword id="KW-0001">2Fe-2S</keyword>
<keyword id="KW-0028">Amino-acid biosynthesis</keyword>
<keyword id="KW-0100">Branched-chain amino acid biosynthesis</keyword>
<keyword id="KW-0408">Iron</keyword>
<keyword id="KW-0411">Iron-sulfur</keyword>
<keyword id="KW-0456">Lyase</keyword>
<keyword id="KW-0460">Magnesium</keyword>
<keyword id="KW-0479">Metal-binding</keyword>
<protein>
    <recommendedName>
        <fullName evidence="1">Dihydroxy-acid dehydratase</fullName>
        <shortName evidence="1">DAD</shortName>
        <ecNumber evidence="1">4.2.1.9</ecNumber>
    </recommendedName>
</protein>
<sequence length="609" mass="65313">MPDYRSKTSTHGRNMAGARGLWRATGMKDEDFGKPIIAVVNSFTQFVPGHVHLKDLGQLVAAEIQAAGGVAKEFNTIAVDDGIAMGHDGMLYSLPSRDLIADSVEYMVNAHCADAMVCISNCDKITPGMLMAAMRLNIPVVFVSGGPMEAGKVKFRGDEKAIDLVDAMVVAADDSYTDEEVAEFERSACPTCGSCSGMFTANSMNCLTEALGLSLPGNGSIVATHANRKKLFLKAGQLIVELAKRYYEQNDASILPRSIATKAAFKNAMTLDIAMGGSTNTVLHLLAAANEAEVDFTMDDIDELSRRVPVLSKVAPAKQDVHMEDVHRAGGIMAILGELDRANLLDVSVPTVHEKTLKDALDKWDIIRTEDPDVYEFYRSSPGGVPTQVAFSQNRYYSTLDGDREKGVIRNAEHAFSKDGGLAVLYGNIALDGCIVKTAGVDESILKFTGSARVFESQDAAVEAILGNEIKAGDVVVIRYEGPRGGPGMQEMLYPTSYLKSKGLGKDCALVTDGRFSGGSSGLSIGHVSPEAAEGGAIGLVEDGDTIEIDIPNRTIHLNIDDATLAHRRTVQEAKGWHPKEERKRKVSKALKVYAMHTTSAAKGAVRVL</sequence>
<name>ILVD_ACIB5</name>
<dbReference type="EC" id="4.2.1.9" evidence="1"/>
<dbReference type="EMBL" id="CP001182">
    <property type="protein sequence ID" value="ACJ42839.1"/>
    <property type="molecule type" value="Genomic_DNA"/>
</dbReference>
<dbReference type="RefSeq" id="WP_001113593.1">
    <property type="nucleotide sequence ID" value="NC_011586.2"/>
</dbReference>
<dbReference type="SMR" id="B7I2C2"/>
<dbReference type="GeneID" id="92895694"/>
<dbReference type="KEGG" id="abn:AB57_3911"/>
<dbReference type="HOGENOM" id="CLU_014271_4_2_6"/>
<dbReference type="UniPathway" id="UPA00047">
    <property type="reaction ID" value="UER00057"/>
</dbReference>
<dbReference type="UniPathway" id="UPA00049">
    <property type="reaction ID" value="UER00061"/>
</dbReference>
<dbReference type="Proteomes" id="UP000007094">
    <property type="component" value="Chromosome"/>
</dbReference>
<dbReference type="GO" id="GO:0005829">
    <property type="term" value="C:cytosol"/>
    <property type="evidence" value="ECO:0007669"/>
    <property type="project" value="TreeGrafter"/>
</dbReference>
<dbReference type="GO" id="GO:0051537">
    <property type="term" value="F:2 iron, 2 sulfur cluster binding"/>
    <property type="evidence" value="ECO:0007669"/>
    <property type="project" value="UniProtKB-UniRule"/>
</dbReference>
<dbReference type="GO" id="GO:0004160">
    <property type="term" value="F:dihydroxy-acid dehydratase activity"/>
    <property type="evidence" value="ECO:0007669"/>
    <property type="project" value="UniProtKB-UniRule"/>
</dbReference>
<dbReference type="GO" id="GO:0000287">
    <property type="term" value="F:magnesium ion binding"/>
    <property type="evidence" value="ECO:0007669"/>
    <property type="project" value="UniProtKB-UniRule"/>
</dbReference>
<dbReference type="GO" id="GO:0009097">
    <property type="term" value="P:isoleucine biosynthetic process"/>
    <property type="evidence" value="ECO:0007669"/>
    <property type="project" value="UniProtKB-UniRule"/>
</dbReference>
<dbReference type="GO" id="GO:0009099">
    <property type="term" value="P:L-valine biosynthetic process"/>
    <property type="evidence" value="ECO:0007669"/>
    <property type="project" value="UniProtKB-UniRule"/>
</dbReference>
<dbReference type="FunFam" id="3.50.30.80:FF:000001">
    <property type="entry name" value="Dihydroxy-acid dehydratase"/>
    <property type="match status" value="1"/>
</dbReference>
<dbReference type="Gene3D" id="3.50.30.80">
    <property type="entry name" value="IlvD/EDD C-terminal domain-like"/>
    <property type="match status" value="1"/>
</dbReference>
<dbReference type="HAMAP" id="MF_00012">
    <property type="entry name" value="IlvD"/>
    <property type="match status" value="1"/>
</dbReference>
<dbReference type="InterPro" id="IPR042096">
    <property type="entry name" value="Dihydro-acid_dehy_C"/>
</dbReference>
<dbReference type="InterPro" id="IPR004404">
    <property type="entry name" value="DihydroxyA_deHydtase"/>
</dbReference>
<dbReference type="InterPro" id="IPR020558">
    <property type="entry name" value="DiOHA_6PGluconate_deHydtase_CS"/>
</dbReference>
<dbReference type="InterPro" id="IPR056740">
    <property type="entry name" value="ILV_EDD_C"/>
</dbReference>
<dbReference type="InterPro" id="IPR000581">
    <property type="entry name" value="ILV_EDD_N"/>
</dbReference>
<dbReference type="InterPro" id="IPR037237">
    <property type="entry name" value="IlvD/EDD_N"/>
</dbReference>
<dbReference type="NCBIfam" id="TIGR00110">
    <property type="entry name" value="ilvD"/>
    <property type="match status" value="1"/>
</dbReference>
<dbReference type="NCBIfam" id="NF009103">
    <property type="entry name" value="PRK12448.1"/>
    <property type="match status" value="1"/>
</dbReference>
<dbReference type="PANTHER" id="PTHR43661">
    <property type="entry name" value="D-XYLONATE DEHYDRATASE"/>
    <property type="match status" value="1"/>
</dbReference>
<dbReference type="PANTHER" id="PTHR43661:SF3">
    <property type="entry name" value="D-XYLONATE DEHYDRATASE YAGF-RELATED"/>
    <property type="match status" value="1"/>
</dbReference>
<dbReference type="Pfam" id="PF24877">
    <property type="entry name" value="ILV_EDD_C"/>
    <property type="match status" value="1"/>
</dbReference>
<dbReference type="Pfam" id="PF00920">
    <property type="entry name" value="ILVD_EDD_N"/>
    <property type="match status" value="1"/>
</dbReference>
<dbReference type="SUPFAM" id="SSF143975">
    <property type="entry name" value="IlvD/EDD N-terminal domain-like"/>
    <property type="match status" value="1"/>
</dbReference>
<dbReference type="SUPFAM" id="SSF52016">
    <property type="entry name" value="LeuD/IlvD-like"/>
    <property type="match status" value="1"/>
</dbReference>
<dbReference type="PROSITE" id="PS00886">
    <property type="entry name" value="ILVD_EDD_1"/>
    <property type="match status" value="1"/>
</dbReference>
<dbReference type="PROSITE" id="PS00887">
    <property type="entry name" value="ILVD_EDD_2"/>
    <property type="match status" value="1"/>
</dbReference>